<gene>
    <name evidence="1" type="primary">rpmJ</name>
    <name type="ordered locus">Bpet4928</name>
</gene>
<accession>A9IHS2</accession>
<comment type="similarity">
    <text evidence="1">Belongs to the bacterial ribosomal protein bL36 family.</text>
</comment>
<dbReference type="EMBL" id="AM902716">
    <property type="protein sequence ID" value="CAP45280.1"/>
    <property type="molecule type" value="Genomic_DNA"/>
</dbReference>
<dbReference type="SMR" id="A9IHS2"/>
<dbReference type="STRING" id="94624.Bpet4928"/>
<dbReference type="KEGG" id="bpt:Bpet4928"/>
<dbReference type="eggNOG" id="COG0257">
    <property type="taxonomic scope" value="Bacteria"/>
</dbReference>
<dbReference type="Proteomes" id="UP000001225">
    <property type="component" value="Chromosome"/>
</dbReference>
<dbReference type="GO" id="GO:0005737">
    <property type="term" value="C:cytoplasm"/>
    <property type="evidence" value="ECO:0007669"/>
    <property type="project" value="UniProtKB-ARBA"/>
</dbReference>
<dbReference type="GO" id="GO:1990904">
    <property type="term" value="C:ribonucleoprotein complex"/>
    <property type="evidence" value="ECO:0007669"/>
    <property type="project" value="UniProtKB-KW"/>
</dbReference>
<dbReference type="GO" id="GO:0005840">
    <property type="term" value="C:ribosome"/>
    <property type="evidence" value="ECO:0007669"/>
    <property type="project" value="UniProtKB-KW"/>
</dbReference>
<dbReference type="GO" id="GO:0003735">
    <property type="term" value="F:structural constituent of ribosome"/>
    <property type="evidence" value="ECO:0007669"/>
    <property type="project" value="InterPro"/>
</dbReference>
<dbReference type="GO" id="GO:0006412">
    <property type="term" value="P:translation"/>
    <property type="evidence" value="ECO:0007669"/>
    <property type="project" value="UniProtKB-UniRule"/>
</dbReference>
<dbReference type="HAMAP" id="MF_00251">
    <property type="entry name" value="Ribosomal_bL36"/>
    <property type="match status" value="1"/>
</dbReference>
<dbReference type="InterPro" id="IPR000473">
    <property type="entry name" value="Ribosomal_bL36"/>
</dbReference>
<dbReference type="InterPro" id="IPR035977">
    <property type="entry name" value="Ribosomal_bL36_sp"/>
</dbReference>
<dbReference type="NCBIfam" id="TIGR01022">
    <property type="entry name" value="rpmJ_bact"/>
    <property type="match status" value="1"/>
</dbReference>
<dbReference type="PANTHER" id="PTHR42888">
    <property type="entry name" value="50S RIBOSOMAL PROTEIN L36, CHLOROPLASTIC"/>
    <property type="match status" value="1"/>
</dbReference>
<dbReference type="PANTHER" id="PTHR42888:SF1">
    <property type="entry name" value="LARGE RIBOSOMAL SUBUNIT PROTEIN BL36C"/>
    <property type="match status" value="1"/>
</dbReference>
<dbReference type="Pfam" id="PF00444">
    <property type="entry name" value="Ribosomal_L36"/>
    <property type="match status" value="1"/>
</dbReference>
<dbReference type="SUPFAM" id="SSF57840">
    <property type="entry name" value="Ribosomal protein L36"/>
    <property type="match status" value="1"/>
</dbReference>
<dbReference type="PROSITE" id="PS00828">
    <property type="entry name" value="RIBOSOMAL_L36"/>
    <property type="match status" value="1"/>
</dbReference>
<evidence type="ECO:0000255" key="1">
    <source>
        <dbReference type="HAMAP-Rule" id="MF_00251"/>
    </source>
</evidence>
<evidence type="ECO:0000305" key="2"/>
<protein>
    <recommendedName>
        <fullName evidence="1">Large ribosomal subunit protein bL36</fullName>
    </recommendedName>
    <alternativeName>
        <fullName evidence="2">50S ribosomal protein L36</fullName>
    </alternativeName>
</protein>
<reference key="1">
    <citation type="journal article" date="2008" name="BMC Genomics">
        <title>The missing link: Bordetella petrii is endowed with both the metabolic versatility of environmental bacteria and virulence traits of pathogenic Bordetellae.</title>
        <authorList>
            <person name="Gross R."/>
            <person name="Guzman C.A."/>
            <person name="Sebaihia M."/>
            <person name="Martin dos Santos V.A.P."/>
            <person name="Pieper D.H."/>
            <person name="Koebnik R."/>
            <person name="Lechner M."/>
            <person name="Bartels D."/>
            <person name="Buhrmester J."/>
            <person name="Choudhuri J.V."/>
            <person name="Ebensen T."/>
            <person name="Gaigalat L."/>
            <person name="Herrmann S."/>
            <person name="Khachane A.N."/>
            <person name="Larisch C."/>
            <person name="Link S."/>
            <person name="Linke B."/>
            <person name="Meyer F."/>
            <person name="Mormann S."/>
            <person name="Nakunst D."/>
            <person name="Rueckert C."/>
            <person name="Schneiker-Bekel S."/>
            <person name="Schulze K."/>
            <person name="Voerholter F.-J."/>
            <person name="Yevsa T."/>
            <person name="Engle J.T."/>
            <person name="Goldman W.E."/>
            <person name="Puehler A."/>
            <person name="Goebel U.B."/>
            <person name="Goesmann A."/>
            <person name="Bloecker H."/>
            <person name="Kaiser O."/>
            <person name="Martinez-Arias R."/>
        </authorList>
    </citation>
    <scope>NUCLEOTIDE SEQUENCE [LARGE SCALE GENOMIC DNA]</scope>
    <source>
        <strain>ATCC BAA-461 / DSM 12804 / CCUG 43448</strain>
    </source>
</reference>
<feature type="chain" id="PRO_1000101004" description="Large ribosomal subunit protein bL36">
    <location>
        <begin position="1"/>
        <end position="37"/>
    </location>
</feature>
<keyword id="KW-0687">Ribonucleoprotein</keyword>
<keyword id="KW-0689">Ribosomal protein</keyword>
<name>RL36_BORPD</name>
<sequence>MKVMASVKRICRNCKVIKRHGVVRVICTDPRHKQRQG</sequence>
<organism>
    <name type="scientific">Bordetella petrii (strain ATCC BAA-461 / DSM 12804 / CCUG 43448)</name>
    <dbReference type="NCBI Taxonomy" id="340100"/>
    <lineage>
        <taxon>Bacteria</taxon>
        <taxon>Pseudomonadati</taxon>
        <taxon>Pseudomonadota</taxon>
        <taxon>Betaproteobacteria</taxon>
        <taxon>Burkholderiales</taxon>
        <taxon>Alcaligenaceae</taxon>
        <taxon>Bordetella</taxon>
    </lineage>
</organism>
<proteinExistence type="inferred from homology"/>